<gene>
    <name type="ordered locus">BT_1371</name>
</gene>
<proteinExistence type="inferred from homology"/>
<dbReference type="EMBL" id="AM260525">
    <property type="protein sequence ID" value="CAK01733.1"/>
    <property type="molecule type" value="Genomic_DNA"/>
</dbReference>
<dbReference type="RefSeq" id="WP_012231914.1">
    <property type="nucleotide sequence ID" value="NC_010161.1"/>
</dbReference>
<dbReference type="SMR" id="A9IVK2"/>
<dbReference type="KEGG" id="btr:BT_1371"/>
<dbReference type="eggNOG" id="COG0232">
    <property type="taxonomic scope" value="Bacteria"/>
</dbReference>
<dbReference type="HOGENOM" id="CLU_028163_1_0_5"/>
<dbReference type="Proteomes" id="UP000001592">
    <property type="component" value="Chromosome"/>
</dbReference>
<dbReference type="GO" id="GO:0008832">
    <property type="term" value="F:dGTPase activity"/>
    <property type="evidence" value="ECO:0007669"/>
    <property type="project" value="TreeGrafter"/>
</dbReference>
<dbReference type="GO" id="GO:0006203">
    <property type="term" value="P:dGTP catabolic process"/>
    <property type="evidence" value="ECO:0007669"/>
    <property type="project" value="TreeGrafter"/>
</dbReference>
<dbReference type="CDD" id="cd00077">
    <property type="entry name" value="HDc"/>
    <property type="match status" value="1"/>
</dbReference>
<dbReference type="Gene3D" id="1.10.3210.10">
    <property type="entry name" value="Hypothetical protein af1432"/>
    <property type="match status" value="1"/>
</dbReference>
<dbReference type="HAMAP" id="MF_01212">
    <property type="entry name" value="dGTPase_type2"/>
    <property type="match status" value="1"/>
</dbReference>
<dbReference type="InterPro" id="IPR006261">
    <property type="entry name" value="dGTPase"/>
</dbReference>
<dbReference type="InterPro" id="IPR050135">
    <property type="entry name" value="dGTPase-like"/>
</dbReference>
<dbReference type="InterPro" id="IPR023023">
    <property type="entry name" value="dNTPase_2"/>
</dbReference>
<dbReference type="InterPro" id="IPR003607">
    <property type="entry name" value="HD/PDEase_dom"/>
</dbReference>
<dbReference type="InterPro" id="IPR006674">
    <property type="entry name" value="HD_domain"/>
</dbReference>
<dbReference type="InterPro" id="IPR026875">
    <property type="entry name" value="PHydrolase_assoc_dom"/>
</dbReference>
<dbReference type="NCBIfam" id="TIGR01353">
    <property type="entry name" value="dGTP_triPase"/>
    <property type="match status" value="1"/>
</dbReference>
<dbReference type="NCBIfam" id="NF002326">
    <property type="entry name" value="PRK01286.1-1"/>
    <property type="match status" value="1"/>
</dbReference>
<dbReference type="NCBIfam" id="NF002328">
    <property type="entry name" value="PRK01286.1-3"/>
    <property type="match status" value="1"/>
</dbReference>
<dbReference type="PANTHER" id="PTHR11373:SF43">
    <property type="entry name" value="DEOXYGUANOSINETRIPHOSPHATE TRIPHOSPHOHYDROLASE-LIKE PROTEIN"/>
    <property type="match status" value="1"/>
</dbReference>
<dbReference type="PANTHER" id="PTHR11373">
    <property type="entry name" value="DEOXYNUCLEOSIDE TRIPHOSPHATE TRIPHOSPHOHYDROLASE"/>
    <property type="match status" value="1"/>
</dbReference>
<dbReference type="Pfam" id="PF01966">
    <property type="entry name" value="HD"/>
    <property type="match status" value="1"/>
</dbReference>
<dbReference type="Pfam" id="PF13286">
    <property type="entry name" value="HD_assoc"/>
    <property type="match status" value="1"/>
</dbReference>
<dbReference type="SMART" id="SM00471">
    <property type="entry name" value="HDc"/>
    <property type="match status" value="1"/>
</dbReference>
<dbReference type="SUPFAM" id="SSF109604">
    <property type="entry name" value="HD-domain/PDEase-like"/>
    <property type="match status" value="1"/>
</dbReference>
<dbReference type="PROSITE" id="PS51831">
    <property type="entry name" value="HD"/>
    <property type="match status" value="1"/>
</dbReference>
<feature type="chain" id="PRO_1000085569" description="Deoxyguanosinetriphosphate triphosphohydrolase-like protein">
    <location>
        <begin position="1"/>
        <end position="400"/>
    </location>
</feature>
<feature type="domain" description="HD" evidence="2">
    <location>
        <begin position="73"/>
        <end position="215"/>
    </location>
</feature>
<comment type="similarity">
    <text evidence="1">Belongs to the dGTPase family. Type 2 subfamily.</text>
</comment>
<evidence type="ECO:0000255" key="1">
    <source>
        <dbReference type="HAMAP-Rule" id="MF_01212"/>
    </source>
</evidence>
<evidence type="ECO:0000255" key="2">
    <source>
        <dbReference type="PROSITE-ProRule" id="PRU01175"/>
    </source>
</evidence>
<accession>A9IVK2</accession>
<reference key="1">
    <citation type="journal article" date="2007" name="Nat. Genet.">
        <title>Genomic analysis of Bartonella identifies type IV secretion systems as host adaptability factors.</title>
        <authorList>
            <person name="Saenz H.L."/>
            <person name="Engel P."/>
            <person name="Stoeckli M.C."/>
            <person name="Lanz C."/>
            <person name="Raddatz G."/>
            <person name="Vayssier-Taussat M."/>
            <person name="Birtles R."/>
            <person name="Schuster S.C."/>
            <person name="Dehio C."/>
        </authorList>
    </citation>
    <scope>NUCLEOTIDE SEQUENCE [LARGE SCALE GENOMIC DNA]</scope>
    <source>
        <strain>CIP 105476 / IBS 506</strain>
    </source>
</reference>
<organism>
    <name type="scientific">Bartonella tribocorum (strain CIP 105476 / IBS 506)</name>
    <dbReference type="NCBI Taxonomy" id="382640"/>
    <lineage>
        <taxon>Bacteria</taxon>
        <taxon>Pseudomonadati</taxon>
        <taxon>Pseudomonadota</taxon>
        <taxon>Alphaproteobacteria</taxon>
        <taxon>Hyphomicrobiales</taxon>
        <taxon>Bartonellaceae</taxon>
        <taxon>Bartonella</taxon>
    </lineage>
</organism>
<keyword id="KW-0378">Hydrolase</keyword>
<name>DGTL1_BART1</name>
<sequence>MDIGTINFNYQSRAVYSAHPQTSRGRLFHEKMNTARTPFQRDRDRIIHSNAFRRLKHKTQVFIADESDHYRTRLTHSIEVSQIARTLARALYLDEDLTEAIALVHDFGHTPFGHAGEEALNEAMMQYGGFDHNAQALRIVTKLEQRYANFDGLNLTWETLEGLVKHNGPLLGPYAKNKEVPSDILQYNAKQDLALDCFAGLEAQCAAIADDIAYNAHDIDDGLRSQFLTLDQFEHVPLTAAILKEITDEHPQLDQARCGYTLVRRQITTMIEDVLKQSHENLARIKPTSINDIYQAKQTIVTFSPSMTVYEKELKNFLFENLYYHEQILSRRNAAKCIVQKLFNCYYENPDTMPESWCQKAVHLKNQELARLIADFLSGMSDHYALREYHRLFDHTNHFV</sequence>
<protein>
    <recommendedName>
        <fullName evidence="1">Deoxyguanosinetriphosphate triphosphohydrolase-like protein</fullName>
    </recommendedName>
</protein>